<keyword id="KW-0251">Elongation factor</keyword>
<keyword id="KW-0489">Methyltransferase</keyword>
<keyword id="KW-0506">mRNA capping</keyword>
<keyword id="KW-0507">mRNA processing</keyword>
<keyword id="KW-0648">Protein biosynthesis</keyword>
<keyword id="KW-1185">Reference proteome</keyword>
<keyword id="KW-0949">S-adenosyl-L-methionine</keyword>
<keyword id="KW-0804">Transcription</keyword>
<keyword id="KW-0808">Transferase</keyword>
<keyword id="KW-0946">Virion</keyword>
<dbReference type="EC" id="2.1.1.57"/>
<dbReference type="EMBL" id="AF170726">
    <property type="protein sequence ID" value="AAF14953.1"/>
    <property type="molecule type" value="Genomic_DNA"/>
</dbReference>
<dbReference type="RefSeq" id="NP_051779.1">
    <property type="nucleotide sequence ID" value="NC_001132.2"/>
</dbReference>
<dbReference type="SMR" id="P68544"/>
<dbReference type="GeneID" id="932114"/>
<dbReference type="KEGG" id="vg:932114"/>
<dbReference type="Proteomes" id="UP000000867">
    <property type="component" value="Segment"/>
</dbReference>
<dbReference type="GO" id="GO:0044423">
    <property type="term" value="C:virion component"/>
    <property type="evidence" value="ECO:0007669"/>
    <property type="project" value="UniProtKB-KW"/>
</dbReference>
<dbReference type="GO" id="GO:0004483">
    <property type="term" value="F:mRNA (nucleoside-2'-O-)-methyltransferase activity"/>
    <property type="evidence" value="ECO:0007669"/>
    <property type="project" value="UniProtKB-EC"/>
</dbReference>
<dbReference type="GO" id="GO:0006370">
    <property type="term" value="P:7-methylguanosine mRNA capping"/>
    <property type="evidence" value="ECO:0007669"/>
    <property type="project" value="UniProtKB-KW"/>
</dbReference>
<dbReference type="GO" id="GO:0032259">
    <property type="term" value="P:methylation"/>
    <property type="evidence" value="ECO:0007669"/>
    <property type="project" value="UniProtKB-KW"/>
</dbReference>
<dbReference type="GO" id="GO:0031440">
    <property type="term" value="P:regulation of mRNA 3'-end processing"/>
    <property type="evidence" value="ECO:0007669"/>
    <property type="project" value="InterPro"/>
</dbReference>
<dbReference type="CDD" id="cd20756">
    <property type="entry name" value="capping_2-OMTase_Poxviridae"/>
    <property type="match status" value="1"/>
</dbReference>
<dbReference type="Gene3D" id="3.40.50.150">
    <property type="entry name" value="Vaccinia Virus protein VP39"/>
    <property type="match status" value="1"/>
</dbReference>
<dbReference type="InterPro" id="IPR000176">
    <property type="entry name" value="mRNA_MeTrfase-like"/>
</dbReference>
<dbReference type="InterPro" id="IPR025804">
    <property type="entry name" value="Pox/kineto_cap_MeTfrase"/>
</dbReference>
<dbReference type="InterPro" id="IPR030375">
    <property type="entry name" value="Poxvir_cap_MeTfrase"/>
</dbReference>
<dbReference type="InterPro" id="IPR029063">
    <property type="entry name" value="SAM-dependent_MTases_sf"/>
</dbReference>
<dbReference type="Pfam" id="PF01358">
    <property type="entry name" value="PARP_regulatory"/>
    <property type="match status" value="1"/>
</dbReference>
<dbReference type="PIRSF" id="PIRSF003726">
    <property type="entry name" value="PolA_polym_reg_poxV"/>
    <property type="match status" value="1"/>
</dbReference>
<dbReference type="SUPFAM" id="SSF53335">
    <property type="entry name" value="S-adenosyl-L-methionine-dependent methyltransferases"/>
    <property type="match status" value="1"/>
</dbReference>
<dbReference type="PROSITE" id="PS51612">
    <property type="entry name" value="SAM_MT_2O_PK"/>
    <property type="match status" value="1"/>
</dbReference>
<accession>P68544</accession>
<accession>P18628</accession>
<name>MCE_MYXVL</name>
<organismHost>
    <name type="scientific">Oryctolagus cuniculus</name>
    <name type="common">Rabbit</name>
    <dbReference type="NCBI Taxonomy" id="9986"/>
</organismHost>
<sequence>MEPVSMDKPFMYFDEIDDELEYEPESVNETPKKLPHQGQLKLLLGELFFLSKLQRHGILDGSTIVYIGSAPGTHIKYLRDHFMSMGLVIKWMLIDGRTHDPILEGLRDVILITKFVDEAYIRQLKKQLYPSRVILISDVRSKRGQKEPTTQDLLSNYSLQNIMVSVLKPAASSLKWRCPFPDQWIKDFYVPHGNEMLQPFAPSYSAEMRLLSIYSGTPIRLKCITQQDSSKYEKKMYYLNKIIRNRIIINFDYSNQEYDFFHMYHMLKTVYSNKSFTSNKSKVLHFHQSIFRFLKIPITNTEKIHHEPTQRKVPSKNTMLKSRNTKKSVRGNKQGRRT</sequence>
<gene>
    <name type="primary">OPG102</name>
    <name type="synonym">PAPS</name>
    <name type="ordered locus">m065R</name>
</gene>
<protein>
    <recommendedName>
        <fullName>Cap-specific mRNA (nucleoside-2'-O-)-methyltransferase</fullName>
        <ecNumber>2.1.1.57</ecNumber>
    </recommendedName>
    <alternativeName>
        <fullName>Poly(A) polymerase regulatory subunit</fullName>
    </alternativeName>
    <alternativeName>
        <fullName>Poly(A) polymerase small subunit</fullName>
        <shortName>PAP-S</shortName>
    </alternativeName>
    <alternativeName>
        <fullName>VP39</fullName>
    </alternativeName>
</protein>
<proteinExistence type="inferred from homology"/>
<comment type="function">
    <text evidence="2">Displays methyltransferase, positive regulation of the poly(A) polymerase and transcription elongation activities. Involved in the modification of both mRNA ends and in intermediate and late gene positive transcription elongation. At the mRNAs 5' end, methylates the ribose 2' OH group of the first transcribed nucleotide, thereby producing a 2'-O-methylpurine cap. At the 3' end, functions as a processivity factor which stimulates the activity of the viral poly(A) polymerase OPG063 that creates mRNA's poly(A) tail. In the presence of OPG102, OPG063 does not dissociate from the RNA allowing tail elongation to around 250 adenylates.</text>
</comment>
<comment type="catalytic activity">
    <reaction evidence="2">
        <text>a 5'-end (N(7)-methyl 5'-triphosphoguanosine)-ribonucleoside in mRNA + S-adenosyl-L-methionine = a 5'-end (N(7)-methyl 5'-triphosphoguanosine)-(2'-O-methyl-ribonucleoside) in mRNA + S-adenosyl-L-homocysteine + H(+)</text>
        <dbReference type="Rhea" id="RHEA:67020"/>
        <dbReference type="Rhea" id="RHEA-COMP:17167"/>
        <dbReference type="Rhea" id="RHEA-COMP:17168"/>
        <dbReference type="ChEBI" id="CHEBI:15378"/>
        <dbReference type="ChEBI" id="CHEBI:57856"/>
        <dbReference type="ChEBI" id="CHEBI:59789"/>
        <dbReference type="ChEBI" id="CHEBI:156461"/>
        <dbReference type="ChEBI" id="CHEBI:167609"/>
        <dbReference type="EC" id="2.1.1.57"/>
    </reaction>
</comment>
<comment type="subunit">
    <text evidence="2">Interacts with poly(A) polymerase catalytic subunit OPG063. Interacts with OPG109 and OPG123; these interactions might help linking transcription to capping and polyadenylation.</text>
</comment>
<comment type="subcellular location">
    <subcellularLocation>
        <location evidence="2">Virion</location>
    </subcellularLocation>
    <text evidence="2">Localizes to the virion core.</text>
</comment>
<comment type="similarity">
    <text evidence="3">Belongs to the class I-like SAM-binding methyltransferase superfamily. Poxvirus/kinetoplastid 2'-O-MTase family.</text>
</comment>
<reference key="1">
    <citation type="journal article" date="1999" name="Virology">
        <title>The complete DNA sequence of myxoma virus.</title>
        <authorList>
            <person name="Cameron C."/>
            <person name="Hota-Mitchell S."/>
            <person name="Chen L."/>
            <person name="Barrett J.W."/>
            <person name="Cao J.-X."/>
            <person name="Macaulay C."/>
            <person name="Willer D.O."/>
            <person name="Evans D.H."/>
            <person name="McFadden G."/>
        </authorList>
    </citation>
    <scope>NUCLEOTIDE SEQUENCE [LARGE SCALE GENOMIC DNA]</scope>
</reference>
<feature type="chain" id="PRO_0000099116" description="Cap-specific mRNA (nucleoside-2'-O-)-methyltransferase">
    <location>
        <begin position="1"/>
        <end position="338"/>
    </location>
</feature>
<feature type="region of interest" description="Binding to Rap94" evidence="1">
    <location>
        <begin position="169"/>
        <end position="333"/>
    </location>
</feature>
<feature type="region of interest" description="Binding to NPH-I" evidence="3">
    <location>
        <begin position="169"/>
        <end position="249"/>
    </location>
</feature>
<feature type="region of interest" description="Disordered" evidence="4">
    <location>
        <begin position="305"/>
        <end position="338"/>
    </location>
</feature>
<feature type="compositionally biased region" description="Basic residues" evidence="4">
    <location>
        <begin position="323"/>
        <end position="338"/>
    </location>
</feature>
<feature type="active site" description="For methyltransferase activity" evidence="3">
    <location>
        <position position="175"/>
    </location>
</feature>
<feature type="binding site" evidence="3">
    <location>
        <position position="22"/>
    </location>
    <ligand>
        <name>mRNA</name>
        <dbReference type="ChEBI" id="CHEBI:33699"/>
    </ligand>
    <ligandPart>
        <name>mRNA cap</name>
    </ligandPart>
</feature>
<feature type="binding site" evidence="3">
    <location>
        <position position="39"/>
    </location>
    <ligand>
        <name>S-adenosyl-L-methionine</name>
        <dbReference type="ChEBI" id="CHEBI:59789"/>
    </ligand>
</feature>
<feature type="binding site" evidence="3">
    <location>
        <position position="66"/>
    </location>
    <ligand>
        <name>S-adenosyl-L-methionine</name>
        <dbReference type="ChEBI" id="CHEBI:59789"/>
    </ligand>
</feature>
<feature type="binding site" evidence="3">
    <location>
        <position position="68"/>
    </location>
    <ligand>
        <name>S-adenosyl-L-methionine</name>
        <dbReference type="ChEBI" id="CHEBI:59789"/>
    </ligand>
</feature>
<feature type="binding site" evidence="3">
    <location>
        <position position="72"/>
    </location>
    <ligand>
        <name>S-adenosyl-L-methionine</name>
        <dbReference type="ChEBI" id="CHEBI:59789"/>
    </ligand>
</feature>
<feature type="binding site" evidence="3">
    <location>
        <position position="95"/>
    </location>
    <ligand>
        <name>S-adenosyl-L-methionine</name>
        <dbReference type="ChEBI" id="CHEBI:59789"/>
    </ligand>
</feature>
<feature type="binding site" evidence="3">
    <location>
        <position position="97"/>
    </location>
    <ligand>
        <name>S-adenosyl-L-methionine</name>
        <dbReference type="ChEBI" id="CHEBI:59789"/>
    </ligand>
</feature>
<feature type="binding site" evidence="3">
    <location>
        <position position="116"/>
    </location>
    <ligand>
        <name>S-adenosyl-L-methionine</name>
        <dbReference type="ChEBI" id="CHEBI:59789"/>
    </ligand>
</feature>
<feature type="binding site" evidence="3">
    <location>
        <position position="138"/>
    </location>
    <ligand>
        <name>S-adenosyl-L-methionine</name>
        <dbReference type="ChEBI" id="CHEBI:59789"/>
    </ligand>
</feature>
<feature type="binding site" evidence="3">
    <location>
        <begin position="177"/>
        <end position="180"/>
    </location>
    <ligand>
        <name>mRNA</name>
        <dbReference type="ChEBI" id="CHEBI:33699"/>
    </ligand>
    <ligandPart>
        <name>mRNA cap</name>
    </ligandPart>
</feature>
<feature type="binding site" evidence="3">
    <location>
        <position position="182"/>
    </location>
    <ligand>
        <name>mRNA</name>
        <dbReference type="ChEBI" id="CHEBI:33699"/>
    </ligand>
    <ligandPart>
        <name>mRNA cap</name>
    </ligandPart>
</feature>
<feature type="binding site" evidence="3">
    <location>
        <begin position="205"/>
        <end position="207"/>
    </location>
    <ligand>
        <name>mRNA</name>
        <dbReference type="ChEBI" id="CHEBI:33699"/>
    </ligand>
    <ligandPart>
        <name>mRNA cap</name>
    </ligandPart>
</feature>
<feature type="binding site" evidence="3">
    <location>
        <position position="233"/>
    </location>
    <ligand>
        <name>mRNA</name>
        <dbReference type="ChEBI" id="CHEBI:33699"/>
    </ligand>
    <ligandPart>
        <name>mRNA cap</name>
    </ligandPart>
</feature>
<evidence type="ECO:0000250" key="1"/>
<evidence type="ECO:0000250" key="2">
    <source>
        <dbReference type="UniProtKB" id="P07617"/>
    </source>
</evidence>
<evidence type="ECO:0000255" key="3">
    <source>
        <dbReference type="PROSITE-ProRule" id="PRU00944"/>
    </source>
</evidence>
<evidence type="ECO:0000256" key="4">
    <source>
        <dbReference type="SAM" id="MobiDB-lite"/>
    </source>
</evidence>
<organism>
    <name type="scientific">Myxoma virus (strain Lausanne)</name>
    <name type="common">MYXV</name>
    <dbReference type="NCBI Taxonomy" id="31530"/>
    <lineage>
        <taxon>Viruses</taxon>
        <taxon>Varidnaviria</taxon>
        <taxon>Bamfordvirae</taxon>
        <taxon>Nucleocytoviricota</taxon>
        <taxon>Pokkesviricetes</taxon>
        <taxon>Chitovirales</taxon>
        <taxon>Poxviridae</taxon>
        <taxon>Chordopoxvirinae</taxon>
        <taxon>Leporipoxvirus</taxon>
        <taxon>Myxoma virus</taxon>
    </lineage>
</organism>